<keyword id="KW-0028">Amino-acid biosynthesis</keyword>
<keyword id="KW-0055">Arginine biosynthesis</keyword>
<keyword id="KW-0963">Cytoplasm</keyword>
<keyword id="KW-0808">Transferase</keyword>
<reference key="1">
    <citation type="journal article" date="1990" name="Gene">
        <title>Sequence of the argF gene encoding ornithine transcarbamoylase from Neisseria gonorrhoeae.</title>
        <authorList>
            <person name="Martin P.R."/>
            <person name="Cooperider J.W."/>
            <person name="Mulks M.H."/>
        </authorList>
    </citation>
    <scope>NUCLEOTIDE SEQUENCE [GENOMIC DNA]</scope>
</reference>
<reference key="2">
    <citation type="journal article" date="1992" name="Mol. Microbiol.">
        <title>Sequence diversity within the argF, fbp and recA genes of natural isolates of Neisseria meningitidis: interspecies recombination within the argF gene.</title>
        <authorList>
            <person name="Zhou J."/>
            <person name="Spratt B.G."/>
        </authorList>
    </citation>
    <scope>NUCLEOTIDE SEQUENCE [GENOMIC DNA] OF 53-314</scope>
    <source>
        <strain>FA19</strain>
    </source>
</reference>
<gene>
    <name type="primary">argF</name>
</gene>
<name>OTC_NEIGO</name>
<organism>
    <name type="scientific">Neisseria gonorrhoeae</name>
    <dbReference type="NCBI Taxonomy" id="485"/>
    <lineage>
        <taxon>Bacteria</taxon>
        <taxon>Pseudomonadati</taxon>
        <taxon>Pseudomonadota</taxon>
        <taxon>Betaproteobacteria</taxon>
        <taxon>Neisseriales</taxon>
        <taxon>Neisseriaceae</taxon>
        <taxon>Neisseria</taxon>
    </lineage>
</organism>
<comment type="function">
    <text evidence="1">Reversibly catalyzes the transfer of the carbamoyl group from carbamoyl phosphate (CP) to the N(epsilon) atom of ornithine (ORN) to produce L-citrulline.</text>
</comment>
<comment type="catalytic activity">
    <reaction>
        <text>carbamoyl phosphate + L-ornithine = L-citrulline + phosphate + H(+)</text>
        <dbReference type="Rhea" id="RHEA:19513"/>
        <dbReference type="ChEBI" id="CHEBI:15378"/>
        <dbReference type="ChEBI" id="CHEBI:43474"/>
        <dbReference type="ChEBI" id="CHEBI:46911"/>
        <dbReference type="ChEBI" id="CHEBI:57743"/>
        <dbReference type="ChEBI" id="CHEBI:58228"/>
        <dbReference type="EC" id="2.1.3.3"/>
    </reaction>
</comment>
<comment type="pathway">
    <text>Amino-acid biosynthesis; L-arginine biosynthesis; L-arginine from L-ornithine and carbamoyl phosphate: step 1/3.</text>
</comment>
<comment type="subcellular location">
    <subcellularLocation>
        <location evidence="1">Cytoplasm</location>
    </subcellularLocation>
</comment>
<comment type="similarity">
    <text evidence="3">Belongs to the aspartate/ornithine carbamoyltransferase superfamily. OTCase family.</text>
</comment>
<feature type="chain" id="PRO_0000112962" description="Ornithine carbamoyltransferase">
    <location>
        <begin position="1"/>
        <end position="331"/>
    </location>
</feature>
<feature type="binding site" evidence="2">
    <location>
        <begin position="55"/>
        <end position="58"/>
    </location>
    <ligand>
        <name>carbamoyl phosphate</name>
        <dbReference type="ChEBI" id="CHEBI:58228"/>
    </ligand>
</feature>
<feature type="binding site" evidence="2">
    <location>
        <position position="82"/>
    </location>
    <ligand>
        <name>carbamoyl phosphate</name>
        <dbReference type="ChEBI" id="CHEBI:58228"/>
    </ligand>
</feature>
<feature type="binding site" evidence="2">
    <location>
        <position position="106"/>
    </location>
    <ligand>
        <name>carbamoyl phosphate</name>
        <dbReference type="ChEBI" id="CHEBI:58228"/>
    </ligand>
</feature>
<feature type="binding site" evidence="2">
    <location>
        <begin position="133"/>
        <end position="136"/>
    </location>
    <ligand>
        <name>carbamoyl phosphate</name>
        <dbReference type="ChEBI" id="CHEBI:58228"/>
    </ligand>
</feature>
<feature type="binding site" evidence="2">
    <location>
        <position position="166"/>
    </location>
    <ligand>
        <name>L-ornithine</name>
        <dbReference type="ChEBI" id="CHEBI:46911"/>
    </ligand>
</feature>
<feature type="binding site" evidence="2">
    <location>
        <position position="230"/>
    </location>
    <ligand>
        <name>L-ornithine</name>
        <dbReference type="ChEBI" id="CHEBI:46911"/>
    </ligand>
</feature>
<feature type="binding site" evidence="2">
    <location>
        <begin position="234"/>
        <end position="235"/>
    </location>
    <ligand>
        <name>L-ornithine</name>
        <dbReference type="ChEBI" id="CHEBI:46911"/>
    </ligand>
</feature>
<feature type="binding site" evidence="2">
    <location>
        <begin position="272"/>
        <end position="273"/>
    </location>
    <ligand>
        <name>carbamoyl phosphate</name>
        <dbReference type="ChEBI" id="CHEBI:58228"/>
    </ligand>
</feature>
<feature type="binding site" evidence="2">
    <location>
        <position position="317"/>
    </location>
    <ligand>
        <name>carbamoyl phosphate</name>
        <dbReference type="ChEBI" id="CHEBI:58228"/>
    </ligand>
</feature>
<feature type="sequence variant" description="In strain: FA19.">
    <original>DR</original>
    <variation>AA</variation>
    <location>
        <begin position="72"/>
        <end position="73"/>
    </location>
</feature>
<proteinExistence type="inferred from homology"/>
<sequence length="331" mass="36732">MNLKNRHFLKLLDFTPEEITAYLDLAAELKDAKKAGREIQRMKGKNIALIFEKTSTRTRCAFEVAARDQGADRTYLEPSASQIGHKESIKDTARVLGRMYDAIEYRGFAQETVEELAKYAGVPVFNGLTNEFHPTQMLADALTMREHSGKPLNQTAFAYVGDARYNMGNSLLILGAKLGMDVRIGAPQSLWPSEGIIAAAHAAAKETGAKITLTENAHEAVKGVGFIHTDVWVSMGEPKEVWQERIDLLKDYRVTPELMAASGNPQVKFMHCLPAFHNRETKVGEWIYETFGLNGVEVTEEVFESPAGIVFDQAENRMHTIKAVMVAALGD</sequence>
<accession>P21302</accession>
<protein>
    <recommendedName>
        <fullName>Ornithine carbamoyltransferase</fullName>
        <shortName>OTCase</shortName>
        <ecNumber>2.1.3.3</ecNumber>
    </recommendedName>
</protein>
<dbReference type="EC" id="2.1.3.3"/>
<dbReference type="EMBL" id="M34930">
    <property type="protein sequence ID" value="AAA25446.1"/>
    <property type="molecule type" value="Genomic_DNA"/>
</dbReference>
<dbReference type="EMBL" id="X64860">
    <property type="protein sequence ID" value="CAA46072.1"/>
    <property type="molecule type" value="Genomic_DNA"/>
</dbReference>
<dbReference type="PIR" id="JQ0775">
    <property type="entry name" value="OWNHG"/>
</dbReference>
<dbReference type="SMR" id="P21302"/>
<dbReference type="UniPathway" id="UPA00068">
    <property type="reaction ID" value="UER00112"/>
</dbReference>
<dbReference type="GO" id="GO:0005737">
    <property type="term" value="C:cytoplasm"/>
    <property type="evidence" value="ECO:0007669"/>
    <property type="project" value="UniProtKB-SubCell"/>
</dbReference>
<dbReference type="GO" id="GO:0016597">
    <property type="term" value="F:amino acid binding"/>
    <property type="evidence" value="ECO:0007669"/>
    <property type="project" value="InterPro"/>
</dbReference>
<dbReference type="GO" id="GO:0004585">
    <property type="term" value="F:ornithine carbamoyltransferase activity"/>
    <property type="evidence" value="ECO:0007669"/>
    <property type="project" value="UniProtKB-UniRule"/>
</dbReference>
<dbReference type="GO" id="GO:0042450">
    <property type="term" value="P:arginine biosynthetic process via ornithine"/>
    <property type="evidence" value="ECO:0007669"/>
    <property type="project" value="TreeGrafter"/>
</dbReference>
<dbReference type="GO" id="GO:0019240">
    <property type="term" value="P:citrulline biosynthetic process"/>
    <property type="evidence" value="ECO:0007669"/>
    <property type="project" value="TreeGrafter"/>
</dbReference>
<dbReference type="GO" id="GO:0006526">
    <property type="term" value="P:L-arginine biosynthetic process"/>
    <property type="evidence" value="ECO:0007669"/>
    <property type="project" value="UniProtKB-UniPathway"/>
</dbReference>
<dbReference type="FunFam" id="3.40.50.1370:FF:000004">
    <property type="entry name" value="Ornithine carbamoyltransferase"/>
    <property type="match status" value="1"/>
</dbReference>
<dbReference type="Gene3D" id="3.40.50.1370">
    <property type="entry name" value="Aspartate/ornithine carbamoyltransferase"/>
    <property type="match status" value="2"/>
</dbReference>
<dbReference type="HAMAP" id="MF_01109">
    <property type="entry name" value="OTCase"/>
    <property type="match status" value="1"/>
</dbReference>
<dbReference type="InterPro" id="IPR006132">
    <property type="entry name" value="Asp/Orn_carbamoyltranf_P-bd"/>
</dbReference>
<dbReference type="InterPro" id="IPR006130">
    <property type="entry name" value="Asp/Orn_carbamoylTrfase"/>
</dbReference>
<dbReference type="InterPro" id="IPR036901">
    <property type="entry name" value="Asp/Orn_carbamoylTrfase_sf"/>
</dbReference>
<dbReference type="InterPro" id="IPR006131">
    <property type="entry name" value="Asp_carbamoyltransf_Asp/Orn-bd"/>
</dbReference>
<dbReference type="InterPro" id="IPR002292">
    <property type="entry name" value="Orn/put_carbamltrans"/>
</dbReference>
<dbReference type="InterPro" id="IPR024904">
    <property type="entry name" value="OTCase_ArgI"/>
</dbReference>
<dbReference type="NCBIfam" id="TIGR00658">
    <property type="entry name" value="orni_carb_tr"/>
    <property type="match status" value="1"/>
</dbReference>
<dbReference type="NCBIfam" id="NF002470">
    <property type="entry name" value="PRK01713.1"/>
    <property type="match status" value="1"/>
</dbReference>
<dbReference type="PANTHER" id="PTHR45753:SF2">
    <property type="entry name" value="ORNITHINE CARBAMOYLTRANSFERASE"/>
    <property type="match status" value="1"/>
</dbReference>
<dbReference type="PANTHER" id="PTHR45753">
    <property type="entry name" value="ORNITHINE CARBAMOYLTRANSFERASE, MITOCHONDRIAL"/>
    <property type="match status" value="1"/>
</dbReference>
<dbReference type="Pfam" id="PF00185">
    <property type="entry name" value="OTCace"/>
    <property type="match status" value="1"/>
</dbReference>
<dbReference type="Pfam" id="PF02729">
    <property type="entry name" value="OTCace_N"/>
    <property type="match status" value="1"/>
</dbReference>
<dbReference type="PRINTS" id="PR00100">
    <property type="entry name" value="AOTCASE"/>
</dbReference>
<dbReference type="PRINTS" id="PR00102">
    <property type="entry name" value="OTCASE"/>
</dbReference>
<dbReference type="SUPFAM" id="SSF53671">
    <property type="entry name" value="Aspartate/ornithine carbamoyltransferase"/>
    <property type="match status" value="1"/>
</dbReference>
<dbReference type="PROSITE" id="PS00097">
    <property type="entry name" value="CARBAMOYLTRANSFERASE"/>
    <property type="match status" value="1"/>
</dbReference>
<evidence type="ECO:0000250" key="1"/>
<evidence type="ECO:0000255" key="2">
    <source>
        <dbReference type="HAMAP-Rule" id="MF_01109"/>
    </source>
</evidence>
<evidence type="ECO:0000305" key="3"/>